<feature type="chain" id="PRO_0000088944" description="Actin">
    <location>
        <begin position="1"/>
        <end position="375"/>
    </location>
</feature>
<keyword id="KW-0067">ATP-binding</keyword>
<keyword id="KW-0963">Cytoplasm</keyword>
<keyword id="KW-0206">Cytoskeleton</keyword>
<keyword id="KW-0378">Hydrolase</keyword>
<keyword id="KW-0547">Nucleotide-binding</keyword>
<sequence length="375" mass="41586">MTDDNPAIVIDNGSGMCKAGFAGDDAPRAVFPTVVGRPKRETVLVGSTHKEEYIGDEALAKRGVLKLSYPIEHGQIKDWDMMEKVWHHCYFNELRAQPSDHAVLLTEAPKNPKANREKICQIMFETFAVPAFYVQVQAVLALYSSGRTTGIVIDTGDGVTHTVPVYEGYSLPHAVLRSEIAGKELTDFCQINLQENGASFTTSAEFEIVRDIKEKLCFVALDYESVLAASMESANYTKTYELPDGVVITVNQARFKTPELLFRPELNNSDMDGIHQLCYKTIQKCDIDIRSELYSNVVLSGGSSMFAGLPERLEKELLDLIPAGKRVRISSPEDRKYSAWVGGSVLGSLATFESMWVSSQEYQENGASIANRKCM</sequence>
<reference key="1">
    <citation type="journal article" date="1995" name="J. Mol. Evol.">
        <title>The Giardia lamblia actin gene and the phylogeny of eukaryotes.</title>
        <authorList>
            <person name="Drouin G."/>
            <person name="Moniz de Sa M."/>
            <person name="Zuker M."/>
        </authorList>
    </citation>
    <scope>NUCLEOTIDE SEQUENCE [GENOMIC DNA]</scope>
</reference>
<accession>P51775</accession>
<name>ACT_GIAIN</name>
<protein>
    <recommendedName>
        <fullName>Actin</fullName>
        <ecNumber evidence="1">3.6.4.-</ecNumber>
    </recommendedName>
</protein>
<dbReference type="EC" id="3.6.4.-" evidence="1"/>
<dbReference type="EMBL" id="L29032">
    <property type="protein sequence ID" value="AAA99305.1"/>
    <property type="molecule type" value="Genomic_DNA"/>
</dbReference>
<dbReference type="RefSeq" id="XP_001704653.1">
    <property type="nucleotide sequence ID" value="XM_001704601.1"/>
</dbReference>
<dbReference type="SMR" id="P51775"/>
<dbReference type="GeneID" id="5697520"/>
<dbReference type="KEGG" id="gla:GL50803_0040817"/>
<dbReference type="VEuPathDB" id="GiardiaDB:DHA2_40817"/>
<dbReference type="VEuPathDB" id="GiardiaDB:GL50581_16"/>
<dbReference type="VEuPathDB" id="GiardiaDB:GL50803_0040817"/>
<dbReference type="VEuPathDB" id="GiardiaDB:QR46_2537"/>
<dbReference type="eggNOG" id="KOG0676">
    <property type="taxonomic scope" value="Eukaryota"/>
</dbReference>
<dbReference type="OrthoDB" id="5132116at2759"/>
<dbReference type="GO" id="GO:0005737">
    <property type="term" value="C:cytoplasm"/>
    <property type="evidence" value="ECO:0007669"/>
    <property type="project" value="UniProtKB-KW"/>
</dbReference>
<dbReference type="GO" id="GO:0005856">
    <property type="term" value="C:cytoskeleton"/>
    <property type="evidence" value="ECO:0007669"/>
    <property type="project" value="UniProtKB-SubCell"/>
</dbReference>
<dbReference type="GO" id="GO:0005524">
    <property type="term" value="F:ATP binding"/>
    <property type="evidence" value="ECO:0007669"/>
    <property type="project" value="UniProtKB-KW"/>
</dbReference>
<dbReference type="GO" id="GO:0016787">
    <property type="term" value="F:hydrolase activity"/>
    <property type="evidence" value="ECO:0007669"/>
    <property type="project" value="UniProtKB-KW"/>
</dbReference>
<dbReference type="CDD" id="cd13397">
    <property type="entry name" value="ASKHA_NBD_actin_Arp-T1-3"/>
    <property type="match status" value="1"/>
</dbReference>
<dbReference type="FunFam" id="3.90.640.10:FF:000007">
    <property type="entry name" value="Actin like 7B"/>
    <property type="match status" value="1"/>
</dbReference>
<dbReference type="FunFam" id="3.30.420.40:FF:000291">
    <property type="entry name" value="Actin, alpha skeletal muscle"/>
    <property type="match status" value="1"/>
</dbReference>
<dbReference type="Gene3D" id="3.30.420.40">
    <property type="match status" value="2"/>
</dbReference>
<dbReference type="Gene3D" id="3.90.640.10">
    <property type="entry name" value="Actin, Chain A, domain 4"/>
    <property type="match status" value="1"/>
</dbReference>
<dbReference type="InterPro" id="IPR004000">
    <property type="entry name" value="Actin"/>
</dbReference>
<dbReference type="InterPro" id="IPR020902">
    <property type="entry name" value="Actin/actin-like_CS"/>
</dbReference>
<dbReference type="InterPro" id="IPR004001">
    <property type="entry name" value="Actin_CS"/>
</dbReference>
<dbReference type="InterPro" id="IPR043129">
    <property type="entry name" value="ATPase_NBD"/>
</dbReference>
<dbReference type="PANTHER" id="PTHR11937">
    <property type="entry name" value="ACTIN"/>
    <property type="match status" value="1"/>
</dbReference>
<dbReference type="Pfam" id="PF00022">
    <property type="entry name" value="Actin"/>
    <property type="match status" value="1"/>
</dbReference>
<dbReference type="PRINTS" id="PR00190">
    <property type="entry name" value="ACTIN"/>
</dbReference>
<dbReference type="SMART" id="SM00268">
    <property type="entry name" value="ACTIN"/>
    <property type="match status" value="1"/>
</dbReference>
<dbReference type="SUPFAM" id="SSF53067">
    <property type="entry name" value="Actin-like ATPase domain"/>
    <property type="match status" value="2"/>
</dbReference>
<dbReference type="PROSITE" id="PS00406">
    <property type="entry name" value="ACTINS_1"/>
    <property type="match status" value="1"/>
</dbReference>
<dbReference type="PROSITE" id="PS01132">
    <property type="entry name" value="ACTINS_ACT_LIKE"/>
    <property type="match status" value="1"/>
</dbReference>
<comment type="function">
    <text>Actins are highly conserved proteins that are involved in various types of cell motility and are ubiquitously expressed in all eukaryotic cells.</text>
</comment>
<comment type="catalytic activity">
    <reaction evidence="1">
        <text>ATP + H2O = ADP + phosphate + H(+)</text>
        <dbReference type="Rhea" id="RHEA:13065"/>
        <dbReference type="ChEBI" id="CHEBI:15377"/>
        <dbReference type="ChEBI" id="CHEBI:15378"/>
        <dbReference type="ChEBI" id="CHEBI:30616"/>
        <dbReference type="ChEBI" id="CHEBI:43474"/>
        <dbReference type="ChEBI" id="CHEBI:456216"/>
    </reaction>
</comment>
<comment type="subcellular location">
    <subcellularLocation>
        <location>Cytoplasm</location>
        <location>Cytoskeleton</location>
    </subcellularLocation>
</comment>
<comment type="similarity">
    <text evidence="2">Belongs to the actin family.</text>
</comment>
<organism>
    <name type="scientific">Giardia intestinalis</name>
    <name type="common">Giardia lamblia</name>
    <dbReference type="NCBI Taxonomy" id="5741"/>
    <lineage>
        <taxon>Eukaryota</taxon>
        <taxon>Metamonada</taxon>
        <taxon>Diplomonadida</taxon>
        <taxon>Hexamitidae</taxon>
        <taxon>Giardiinae</taxon>
        <taxon>Giardia</taxon>
    </lineage>
</organism>
<evidence type="ECO:0000250" key="1">
    <source>
        <dbReference type="UniProtKB" id="Q8I4X0"/>
    </source>
</evidence>
<evidence type="ECO:0000305" key="2"/>
<proteinExistence type="inferred from homology"/>